<proteinExistence type="inferred from homology"/>
<organism>
    <name type="scientific">Escherichia coli (strain SE11)</name>
    <dbReference type="NCBI Taxonomy" id="409438"/>
    <lineage>
        <taxon>Bacteria</taxon>
        <taxon>Pseudomonadati</taxon>
        <taxon>Pseudomonadota</taxon>
        <taxon>Gammaproteobacteria</taxon>
        <taxon>Enterobacterales</taxon>
        <taxon>Enterobacteriaceae</taxon>
        <taxon>Escherichia</taxon>
    </lineage>
</organism>
<protein>
    <recommendedName>
        <fullName evidence="1">3-phenylpropionate/cinnamic acid dioxygenase subunit beta</fullName>
        <ecNumber evidence="1">1.14.12.19</ecNumber>
    </recommendedName>
</protein>
<reference key="1">
    <citation type="journal article" date="2008" name="DNA Res.">
        <title>Complete genome sequence and comparative analysis of the wild-type commensal Escherichia coli strain SE11 isolated from a healthy adult.</title>
        <authorList>
            <person name="Oshima K."/>
            <person name="Toh H."/>
            <person name="Ogura Y."/>
            <person name="Sasamoto H."/>
            <person name="Morita H."/>
            <person name="Park S.-H."/>
            <person name="Ooka T."/>
            <person name="Iyoda S."/>
            <person name="Taylor T.D."/>
            <person name="Hayashi T."/>
            <person name="Itoh K."/>
            <person name="Hattori M."/>
        </authorList>
    </citation>
    <scope>NUCLEOTIDE SEQUENCE [LARGE SCALE GENOMIC DNA]</scope>
    <source>
        <strain>SE11</strain>
    </source>
</reference>
<gene>
    <name evidence="1" type="primary">hcaF</name>
    <name type="ordered locus">ECSE_2826</name>
</gene>
<evidence type="ECO:0000255" key="1">
    <source>
        <dbReference type="HAMAP-Rule" id="MF_01649"/>
    </source>
</evidence>
<dbReference type="EC" id="1.14.12.19" evidence="1"/>
<dbReference type="EMBL" id="AP009240">
    <property type="protein sequence ID" value="BAG78350.1"/>
    <property type="molecule type" value="Genomic_DNA"/>
</dbReference>
<dbReference type="RefSeq" id="WP_001276072.1">
    <property type="nucleotide sequence ID" value="NC_011415.1"/>
</dbReference>
<dbReference type="SMR" id="B6I5B2"/>
<dbReference type="GeneID" id="75206232"/>
<dbReference type="KEGG" id="ecy:ECSE_2826"/>
<dbReference type="HOGENOM" id="CLU_102527_1_1_6"/>
<dbReference type="UniPathway" id="UPA00714"/>
<dbReference type="Proteomes" id="UP000008199">
    <property type="component" value="Chromosome"/>
</dbReference>
<dbReference type="GO" id="GO:0008695">
    <property type="term" value="F:3-phenylpropionate dioxygenase activity"/>
    <property type="evidence" value="ECO:0007669"/>
    <property type="project" value="UniProtKB-UniRule"/>
</dbReference>
<dbReference type="GO" id="GO:0019380">
    <property type="term" value="P:3-phenylpropionate catabolic process"/>
    <property type="evidence" value="ECO:0007669"/>
    <property type="project" value="UniProtKB-UniRule"/>
</dbReference>
<dbReference type="CDD" id="cd00667">
    <property type="entry name" value="ring_hydroxylating_dioxygenases_beta"/>
    <property type="match status" value="1"/>
</dbReference>
<dbReference type="FunFam" id="3.10.450.50:FF:000008">
    <property type="entry name" value="3-phenylpropionate/cinnamic acid dioxygenase subunit beta"/>
    <property type="match status" value="1"/>
</dbReference>
<dbReference type="Gene3D" id="3.10.450.50">
    <property type="match status" value="1"/>
</dbReference>
<dbReference type="HAMAP" id="MF_01649">
    <property type="entry name" value="HcaF"/>
    <property type="match status" value="1"/>
</dbReference>
<dbReference type="InterPro" id="IPR054881">
    <property type="entry name" value="3PPDioc_HcaF"/>
</dbReference>
<dbReference type="InterPro" id="IPR023712">
    <property type="entry name" value="HcaF"/>
</dbReference>
<dbReference type="InterPro" id="IPR032710">
    <property type="entry name" value="NTF2-like_dom_sf"/>
</dbReference>
<dbReference type="InterPro" id="IPR000391">
    <property type="entry name" value="Rng_hydr_dOase-bsu"/>
</dbReference>
<dbReference type="NCBIfam" id="NF042947">
    <property type="entry name" value="3PPDioc_HcaF"/>
    <property type="match status" value="1"/>
</dbReference>
<dbReference type="NCBIfam" id="NF007479">
    <property type="entry name" value="PRK10069.1"/>
    <property type="match status" value="1"/>
</dbReference>
<dbReference type="PANTHER" id="PTHR41534:SF2">
    <property type="entry name" value="3-PHENYLPROPIONATE_CINNAMIC ACID DIOXYGENASE SUBUNIT BETA"/>
    <property type="match status" value="1"/>
</dbReference>
<dbReference type="PANTHER" id="PTHR41534">
    <property type="entry name" value="BLR3401 PROTEIN"/>
    <property type="match status" value="1"/>
</dbReference>
<dbReference type="Pfam" id="PF00866">
    <property type="entry name" value="Ring_hydroxyl_B"/>
    <property type="match status" value="1"/>
</dbReference>
<dbReference type="SUPFAM" id="SSF54427">
    <property type="entry name" value="NTF2-like"/>
    <property type="match status" value="1"/>
</dbReference>
<name>HCAF_ECOSE</name>
<keyword id="KW-0058">Aromatic hydrocarbons catabolism</keyword>
<keyword id="KW-0223">Dioxygenase</keyword>
<keyword id="KW-0520">NAD</keyword>
<keyword id="KW-0560">Oxidoreductase</keyword>
<sequence>MSAQVSLELHHRISQFLFHEASLLDDWKFRDWLAQLDEEIRYTMRTTVNAQTRDRRKGVQPPTTWIFNDTKDQLERRIARLETGMAWAEEPPSRTRHLISNCQISETDIPNVFAVRVNYLLYRAQKERDETFYVGTRFDKVRRLEDDNWRLLERDIVLDQAVITSHNLSVLF</sequence>
<feature type="chain" id="PRO_1000186979" description="3-phenylpropionate/cinnamic acid dioxygenase subunit beta">
    <location>
        <begin position="1"/>
        <end position="172"/>
    </location>
</feature>
<comment type="function">
    <text evidence="1">Part of the multicomponent 3-phenylpropionate dioxygenase. Converts 3-phenylpropionic acid (PP) and cinnamic acid (CI) into 3-phenylpropionate-dihydrodiol (PP-dihydrodiol) and cinnamic acid-dihydrodiol (CI-dihydrodiol), respectively.</text>
</comment>
<comment type="catalytic activity">
    <reaction evidence="1">
        <text>3-phenylpropanoate + NADH + O2 + H(+) = 3-(cis-5,6-dihydroxycyclohexa-1,3-dien-1-yl)propanoate + NAD(+)</text>
        <dbReference type="Rhea" id="RHEA:20357"/>
        <dbReference type="ChEBI" id="CHEBI:15378"/>
        <dbReference type="ChEBI" id="CHEBI:15379"/>
        <dbReference type="ChEBI" id="CHEBI:51057"/>
        <dbReference type="ChEBI" id="CHEBI:57540"/>
        <dbReference type="ChEBI" id="CHEBI:57945"/>
        <dbReference type="ChEBI" id="CHEBI:60087"/>
        <dbReference type="EC" id="1.14.12.19"/>
    </reaction>
</comment>
<comment type="catalytic activity">
    <reaction evidence="1">
        <text>(E)-cinnamate + NADH + O2 + H(+) = (2E)-3-(cis-5,6-dihydroxycyclohexa-1,3-dien-1-yl)prop-2-enoate + NAD(+)</text>
        <dbReference type="Rhea" id="RHEA:25058"/>
        <dbReference type="ChEBI" id="CHEBI:15378"/>
        <dbReference type="ChEBI" id="CHEBI:15379"/>
        <dbReference type="ChEBI" id="CHEBI:15669"/>
        <dbReference type="ChEBI" id="CHEBI:57540"/>
        <dbReference type="ChEBI" id="CHEBI:57945"/>
        <dbReference type="ChEBI" id="CHEBI:61451"/>
        <dbReference type="EC" id="1.14.12.19"/>
    </reaction>
</comment>
<comment type="pathway">
    <text evidence="1">Aromatic compound metabolism; 3-phenylpropanoate degradation.</text>
</comment>
<comment type="subunit">
    <text evidence="1">This dioxygenase system consists of four proteins: the two subunits of the hydroxylase component (HcaE and HcaF), a ferredoxin (HcaC) and a ferredoxin reductase (HcaD).</text>
</comment>
<comment type="similarity">
    <text evidence="1">Belongs to the bacterial ring-hydroxylating dioxygenase beta subunit family.</text>
</comment>
<accession>B6I5B2</accession>